<reference key="1">
    <citation type="journal article" date="1990" name="Proc. Natl. Acad. Sci. U.S.A.">
        <title>Different mouse mast cell populations express various combinations of at least six distinct mast cell serine proteases.</title>
        <authorList>
            <person name="Reynolds D.S."/>
            <person name="Stevens R.L."/>
            <person name="Lane W.S."/>
            <person name="Carr M.H."/>
            <person name="Austen K.F."/>
            <person name="Serafin W.E."/>
        </authorList>
    </citation>
    <scope>PROTEIN SEQUENCE</scope>
</reference>
<reference key="2">
    <citation type="journal article" date="1993" name="J. Biol. Chem.">
        <title>Thrombin is inactivated by mast cell secretory granule chymase.</title>
        <authorList>
            <person name="Pejler G."/>
            <person name="Karlstroem A."/>
        </authorList>
    </citation>
    <scope>PROTEIN SEQUENCE OF 1-16</scope>
    <source>
        <tissue>Peritoneal exudate</tissue>
    </source>
</reference>
<proteinExistence type="evidence at protein level"/>
<organism>
    <name type="scientific">Mus musculus</name>
    <name type="common">Mouse</name>
    <dbReference type="NCBI Taxonomy" id="10090"/>
    <lineage>
        <taxon>Eukaryota</taxon>
        <taxon>Metazoa</taxon>
        <taxon>Chordata</taxon>
        <taxon>Craniata</taxon>
        <taxon>Vertebrata</taxon>
        <taxon>Euteleostomi</taxon>
        <taxon>Mammalia</taxon>
        <taxon>Eutheria</taxon>
        <taxon>Euarchontoglires</taxon>
        <taxon>Glires</taxon>
        <taxon>Rodentia</taxon>
        <taxon>Myomorpha</taxon>
        <taxon>Muroidea</taxon>
        <taxon>Muridae</taxon>
        <taxon>Murinae</taxon>
        <taxon>Mus</taxon>
        <taxon>Mus</taxon>
    </lineage>
</organism>
<accession>P21843</accession>
<comment type="function">
    <text>Thrombin inactivating protease. Displays chymotrypsin-like substrate specificity.</text>
</comment>
<comment type="similarity">
    <text evidence="1">Belongs to the peptidase S1 family. Granzyme subfamily.</text>
</comment>
<sequence length="21" mass="2328">IIGGVESRPHSRPYMATLEIT</sequence>
<protein>
    <recommendedName>
        <fullName>Mast cell protease 3</fullName>
        <shortName>mMCP-3</shortName>
        <ecNumber>3.4.21.-</ecNumber>
    </recommendedName>
</protein>
<keyword id="KW-0903">Direct protein sequencing</keyword>
<keyword id="KW-0378">Hydrolase</keyword>
<keyword id="KW-0645">Protease</keyword>
<keyword id="KW-1185">Reference proteome</keyword>
<keyword id="KW-0720">Serine protease</keyword>
<feature type="chain" id="PRO_0000088658" description="Mast cell protease 3">
    <location>
        <begin position="1"/>
        <end position="21" status="greater than"/>
    </location>
</feature>
<feature type="domain" description="Peptidase S1" evidence="1">
    <location>
        <begin position="1"/>
        <end position="21" status="greater than"/>
    </location>
</feature>
<feature type="region of interest" description="Disordered" evidence="2">
    <location>
        <begin position="1"/>
        <end position="21"/>
    </location>
</feature>
<feature type="non-terminal residue">
    <location>
        <position position="21"/>
    </location>
</feature>
<name>MCPT3_MOUSE</name>
<evidence type="ECO:0000255" key="1">
    <source>
        <dbReference type="PROSITE-ProRule" id="PRU00274"/>
    </source>
</evidence>
<evidence type="ECO:0000256" key="2">
    <source>
        <dbReference type="SAM" id="MobiDB-lite"/>
    </source>
</evidence>
<gene>
    <name type="primary">Mcpt3</name>
</gene>
<dbReference type="EC" id="3.4.21.-"/>
<dbReference type="PIR" id="A35646">
    <property type="entry name" value="A35646"/>
</dbReference>
<dbReference type="MEROPS" id="S01.140"/>
<dbReference type="ProteomicsDB" id="295843"/>
<dbReference type="MGI" id="MGI:96939">
    <property type="gene designation" value="Mcpt3"/>
</dbReference>
<dbReference type="InParanoid" id="P21843"/>
<dbReference type="Proteomes" id="UP000000589">
    <property type="component" value="Unplaced"/>
</dbReference>
<dbReference type="GO" id="GO:0008236">
    <property type="term" value="F:serine-type peptidase activity"/>
    <property type="evidence" value="ECO:0007669"/>
    <property type="project" value="UniProtKB-KW"/>
</dbReference>
<dbReference type="GO" id="GO:0006508">
    <property type="term" value="P:proteolysis"/>
    <property type="evidence" value="ECO:0007669"/>
    <property type="project" value="UniProtKB-KW"/>
</dbReference>